<proteinExistence type="inferred from homology"/>
<comment type="function">
    <text evidence="1">The RuvA-RuvB-RuvC complex processes Holliday junction (HJ) DNA during genetic recombination and DNA repair. Endonuclease that resolves HJ intermediates. Cleaves cruciform DNA by making single-stranded nicks across the HJ at symmetrical positions within the homologous arms, yielding a 5'-phosphate and a 3'-hydroxyl group; requires a central core of homology in the junction. The consensus cleavage sequence is 5'-(A/T)TT(C/G)-3'. Cleavage occurs on the 3'-side of the TT dinucleotide at the point of strand exchange. HJ branch migration catalyzed by RuvA-RuvB allows RuvC to scan DNA until it finds its consensus sequence, where it cleaves and resolves the cruciform DNA.</text>
</comment>
<comment type="catalytic activity">
    <reaction evidence="1">
        <text>Endonucleolytic cleavage at a junction such as a reciprocal single-stranded crossover between two homologous DNA duplexes (Holliday junction).</text>
        <dbReference type="EC" id="3.1.21.10"/>
    </reaction>
</comment>
<comment type="cofactor">
    <cofactor evidence="1">
        <name>Mg(2+)</name>
        <dbReference type="ChEBI" id="CHEBI:18420"/>
    </cofactor>
    <text evidence="1">Binds 2 Mg(2+) ion per subunit.</text>
</comment>
<comment type="subunit">
    <text evidence="1">Homodimer which binds Holliday junction (HJ) DNA. The HJ becomes 2-fold symmetrical on binding to RuvC with unstacked arms; it has a different conformation from HJ DNA in complex with RuvA. In the full resolvosome a probable DNA-RuvA(4)-RuvB(12)-RuvC(2) complex forms which resolves the HJ.</text>
</comment>
<comment type="subcellular location">
    <subcellularLocation>
        <location evidence="1">Cytoplasm</location>
    </subcellularLocation>
</comment>
<comment type="similarity">
    <text evidence="1">Belongs to the RuvC family.</text>
</comment>
<organism>
    <name type="scientific">Rhizobium etli (strain ATCC 51251 / DSM 11541 / JCM 21823 / NBRC 15573 / CFN 42)</name>
    <dbReference type="NCBI Taxonomy" id="347834"/>
    <lineage>
        <taxon>Bacteria</taxon>
        <taxon>Pseudomonadati</taxon>
        <taxon>Pseudomonadota</taxon>
        <taxon>Alphaproteobacteria</taxon>
        <taxon>Hyphomicrobiales</taxon>
        <taxon>Rhizobiaceae</taxon>
        <taxon>Rhizobium/Agrobacterium group</taxon>
        <taxon>Rhizobium</taxon>
    </lineage>
</organism>
<sequence length="169" mass="17944">MQNTIRIIGIDPGLRRTGWGIIDTLGNSLKFVASGTVTSDGEMDLASRLCQLHDGLADIVHAHKPDEAAVEQTFVNKDAVATLKLGQARGIAMLVPARAGLPVSEYAPNAVKKAVIGVGHGEKQQIHMMLKILMPKAEFKGDDAADALAIAICHAHNRGGHRMRQALAG</sequence>
<dbReference type="EC" id="3.1.21.10" evidence="1"/>
<dbReference type="EMBL" id="CP000133">
    <property type="protein sequence ID" value="ABC92234.1"/>
    <property type="molecule type" value="Genomic_DNA"/>
</dbReference>
<dbReference type="RefSeq" id="WP_011426701.1">
    <property type="nucleotide sequence ID" value="NC_007761.1"/>
</dbReference>
<dbReference type="SMR" id="Q2K4K2"/>
<dbReference type="KEGG" id="ret:RHE_CH03478"/>
<dbReference type="eggNOG" id="COG0817">
    <property type="taxonomic scope" value="Bacteria"/>
</dbReference>
<dbReference type="HOGENOM" id="CLU_091257_1_0_5"/>
<dbReference type="OrthoDB" id="9805499at2"/>
<dbReference type="Proteomes" id="UP000001936">
    <property type="component" value="Chromosome"/>
</dbReference>
<dbReference type="GO" id="GO:0005737">
    <property type="term" value="C:cytoplasm"/>
    <property type="evidence" value="ECO:0007669"/>
    <property type="project" value="UniProtKB-SubCell"/>
</dbReference>
<dbReference type="GO" id="GO:0048476">
    <property type="term" value="C:Holliday junction resolvase complex"/>
    <property type="evidence" value="ECO:0007669"/>
    <property type="project" value="UniProtKB-UniRule"/>
</dbReference>
<dbReference type="GO" id="GO:0008821">
    <property type="term" value="F:crossover junction DNA endonuclease activity"/>
    <property type="evidence" value="ECO:0007669"/>
    <property type="project" value="UniProtKB-UniRule"/>
</dbReference>
<dbReference type="GO" id="GO:0003677">
    <property type="term" value="F:DNA binding"/>
    <property type="evidence" value="ECO:0007669"/>
    <property type="project" value="UniProtKB-KW"/>
</dbReference>
<dbReference type="GO" id="GO:0000287">
    <property type="term" value="F:magnesium ion binding"/>
    <property type="evidence" value="ECO:0007669"/>
    <property type="project" value="UniProtKB-UniRule"/>
</dbReference>
<dbReference type="GO" id="GO:0006310">
    <property type="term" value="P:DNA recombination"/>
    <property type="evidence" value="ECO:0007669"/>
    <property type="project" value="UniProtKB-UniRule"/>
</dbReference>
<dbReference type="GO" id="GO:0006281">
    <property type="term" value="P:DNA repair"/>
    <property type="evidence" value="ECO:0007669"/>
    <property type="project" value="UniProtKB-UniRule"/>
</dbReference>
<dbReference type="CDD" id="cd16962">
    <property type="entry name" value="RuvC"/>
    <property type="match status" value="1"/>
</dbReference>
<dbReference type="FunFam" id="3.30.420.10:FF:000002">
    <property type="entry name" value="Crossover junction endodeoxyribonuclease RuvC"/>
    <property type="match status" value="1"/>
</dbReference>
<dbReference type="Gene3D" id="3.30.420.10">
    <property type="entry name" value="Ribonuclease H-like superfamily/Ribonuclease H"/>
    <property type="match status" value="1"/>
</dbReference>
<dbReference type="HAMAP" id="MF_00034">
    <property type="entry name" value="RuvC"/>
    <property type="match status" value="1"/>
</dbReference>
<dbReference type="InterPro" id="IPR012337">
    <property type="entry name" value="RNaseH-like_sf"/>
</dbReference>
<dbReference type="InterPro" id="IPR036397">
    <property type="entry name" value="RNaseH_sf"/>
</dbReference>
<dbReference type="InterPro" id="IPR020563">
    <property type="entry name" value="X-over_junc_endoDNase_Mg_BS"/>
</dbReference>
<dbReference type="InterPro" id="IPR002176">
    <property type="entry name" value="X-over_junc_endoDNase_RuvC"/>
</dbReference>
<dbReference type="NCBIfam" id="TIGR00228">
    <property type="entry name" value="ruvC"/>
    <property type="match status" value="1"/>
</dbReference>
<dbReference type="PANTHER" id="PTHR30194">
    <property type="entry name" value="CROSSOVER JUNCTION ENDODEOXYRIBONUCLEASE RUVC"/>
    <property type="match status" value="1"/>
</dbReference>
<dbReference type="PANTHER" id="PTHR30194:SF3">
    <property type="entry name" value="CROSSOVER JUNCTION ENDODEOXYRIBONUCLEASE RUVC"/>
    <property type="match status" value="1"/>
</dbReference>
<dbReference type="Pfam" id="PF02075">
    <property type="entry name" value="RuvC"/>
    <property type="match status" value="1"/>
</dbReference>
<dbReference type="PRINTS" id="PR00696">
    <property type="entry name" value="RSOLVASERUVC"/>
</dbReference>
<dbReference type="SUPFAM" id="SSF53098">
    <property type="entry name" value="Ribonuclease H-like"/>
    <property type="match status" value="1"/>
</dbReference>
<dbReference type="PROSITE" id="PS01321">
    <property type="entry name" value="RUVC"/>
    <property type="match status" value="1"/>
</dbReference>
<reference key="1">
    <citation type="journal article" date="2006" name="Proc. Natl. Acad. Sci. U.S.A.">
        <title>The partitioned Rhizobium etli genome: genetic and metabolic redundancy in seven interacting replicons.</title>
        <authorList>
            <person name="Gonzalez V."/>
            <person name="Santamaria R.I."/>
            <person name="Bustos P."/>
            <person name="Hernandez-Gonzalez I."/>
            <person name="Medrano-Soto A."/>
            <person name="Moreno-Hagelsieb G."/>
            <person name="Janga S.C."/>
            <person name="Ramirez M.A."/>
            <person name="Jimenez-Jacinto V."/>
            <person name="Collado-Vides J."/>
            <person name="Davila G."/>
        </authorList>
    </citation>
    <scope>NUCLEOTIDE SEQUENCE [LARGE SCALE GENOMIC DNA]</scope>
    <source>
        <strain>ATCC 51251 / DSM 11541 / JCM 21823 / NBRC 15573 / CFN 42</strain>
    </source>
</reference>
<feature type="chain" id="PRO_1000002809" description="Crossover junction endodeoxyribonuclease RuvC">
    <location>
        <begin position="1"/>
        <end position="169"/>
    </location>
</feature>
<feature type="active site" evidence="1">
    <location>
        <position position="11"/>
    </location>
</feature>
<feature type="active site" evidence="1">
    <location>
        <position position="71"/>
    </location>
</feature>
<feature type="active site" evidence="1">
    <location>
        <position position="143"/>
    </location>
</feature>
<feature type="binding site" evidence="1">
    <location>
        <position position="11"/>
    </location>
    <ligand>
        <name>Mg(2+)</name>
        <dbReference type="ChEBI" id="CHEBI:18420"/>
        <label>1</label>
    </ligand>
</feature>
<feature type="binding site" evidence="1">
    <location>
        <position position="71"/>
    </location>
    <ligand>
        <name>Mg(2+)</name>
        <dbReference type="ChEBI" id="CHEBI:18420"/>
        <label>2</label>
    </ligand>
</feature>
<feature type="binding site" evidence="1">
    <location>
        <position position="143"/>
    </location>
    <ligand>
        <name>Mg(2+)</name>
        <dbReference type="ChEBI" id="CHEBI:18420"/>
        <label>1</label>
    </ligand>
</feature>
<protein>
    <recommendedName>
        <fullName evidence="1">Crossover junction endodeoxyribonuclease RuvC</fullName>
        <ecNumber evidence="1">3.1.21.10</ecNumber>
    </recommendedName>
    <alternativeName>
        <fullName evidence="1">Holliday junction nuclease RuvC</fullName>
    </alternativeName>
    <alternativeName>
        <fullName evidence="1">Holliday junction resolvase RuvC</fullName>
    </alternativeName>
</protein>
<evidence type="ECO:0000255" key="1">
    <source>
        <dbReference type="HAMAP-Rule" id="MF_00034"/>
    </source>
</evidence>
<keyword id="KW-0963">Cytoplasm</keyword>
<keyword id="KW-0227">DNA damage</keyword>
<keyword id="KW-0233">DNA recombination</keyword>
<keyword id="KW-0234">DNA repair</keyword>
<keyword id="KW-0238">DNA-binding</keyword>
<keyword id="KW-0255">Endonuclease</keyword>
<keyword id="KW-0378">Hydrolase</keyword>
<keyword id="KW-0460">Magnesium</keyword>
<keyword id="KW-0479">Metal-binding</keyword>
<keyword id="KW-0540">Nuclease</keyword>
<keyword id="KW-1185">Reference proteome</keyword>
<gene>
    <name evidence="1" type="primary">ruvC</name>
    <name type="ordered locus">RHE_CH03478</name>
</gene>
<name>RUVC_RHIEC</name>
<accession>Q2K4K2</accession>